<name>CAMPS_PINCO</name>
<gene>
    <name evidence="5" type="primary">TPS-(-)camp/(+)Apin1</name>
    <name evidence="5" type="synonym">TPS-(-)camp</name>
</gene>
<dbReference type="EC" id="4.2.3.117" evidence="4"/>
<dbReference type="EC" id="4.2.3.121" evidence="4"/>
<dbReference type="EC" id="4.2.3.119" evidence="4"/>
<dbReference type="EC" id="4.2.3.120" evidence="4"/>
<dbReference type="EC" id="4.2.3.15" evidence="4"/>
<dbReference type="EC" id="4.2.3.105" evidence="4"/>
<dbReference type="EMBL" id="JQ240299">
    <property type="protein sequence ID" value="AFU73851.1"/>
    <property type="molecule type" value="mRNA"/>
</dbReference>
<dbReference type="SMR" id="R9QMY8"/>
<dbReference type="UniPathway" id="UPA00213"/>
<dbReference type="UniPathway" id="UPA00924"/>
<dbReference type="GO" id="GO:0009507">
    <property type="term" value="C:chloroplast"/>
    <property type="evidence" value="ECO:0007669"/>
    <property type="project" value="UniProtKB-SubCell"/>
</dbReference>
<dbReference type="GO" id="GO:0102703">
    <property type="term" value="F:camphene synthase activity"/>
    <property type="evidence" value="ECO:0000314"/>
    <property type="project" value="UniProtKB"/>
</dbReference>
<dbReference type="GO" id="GO:0000287">
    <property type="term" value="F:magnesium ion binding"/>
    <property type="evidence" value="ECO:0007669"/>
    <property type="project" value="InterPro"/>
</dbReference>
<dbReference type="GO" id="GO:0050551">
    <property type="term" value="F:myrcene synthase activity"/>
    <property type="evidence" value="ECO:0000314"/>
    <property type="project" value="UniProtKB"/>
</dbReference>
<dbReference type="GO" id="GO:0050550">
    <property type="term" value="F:pinene synthase activity"/>
    <property type="evidence" value="ECO:0000314"/>
    <property type="project" value="UniProtKB"/>
</dbReference>
<dbReference type="GO" id="GO:0010333">
    <property type="term" value="F:terpene synthase activity"/>
    <property type="evidence" value="ECO:0000314"/>
    <property type="project" value="UniProtKB"/>
</dbReference>
<dbReference type="GO" id="GO:0102701">
    <property type="term" value="F:tricyclene synthase activity"/>
    <property type="evidence" value="ECO:0000314"/>
    <property type="project" value="UniProtKB"/>
</dbReference>
<dbReference type="GO" id="GO:0018867">
    <property type="term" value="P:alpha-pinene metabolic process"/>
    <property type="evidence" value="ECO:0000314"/>
    <property type="project" value="UniProtKB"/>
</dbReference>
<dbReference type="GO" id="GO:0016102">
    <property type="term" value="P:diterpenoid biosynthetic process"/>
    <property type="evidence" value="ECO:0007669"/>
    <property type="project" value="InterPro"/>
</dbReference>
<dbReference type="GO" id="GO:0010597">
    <property type="term" value="P:green leaf volatile biosynthetic process"/>
    <property type="evidence" value="ECO:0000314"/>
    <property type="project" value="UniProtKB"/>
</dbReference>
<dbReference type="GO" id="GO:0016114">
    <property type="term" value="P:terpenoid biosynthetic process"/>
    <property type="evidence" value="ECO:0000314"/>
    <property type="project" value="UniProtKB"/>
</dbReference>
<dbReference type="CDD" id="cd00684">
    <property type="entry name" value="Terpene_cyclase_plant_C1"/>
    <property type="match status" value="1"/>
</dbReference>
<dbReference type="FunFam" id="1.50.10.130:FF:000002">
    <property type="entry name" value="Ent-copalyl diphosphate synthase, chloroplastic"/>
    <property type="match status" value="1"/>
</dbReference>
<dbReference type="FunFam" id="1.10.600.10:FF:000005">
    <property type="entry name" value="Ent-kaur-16-ene synthase, chloroplastic"/>
    <property type="match status" value="1"/>
</dbReference>
<dbReference type="Gene3D" id="1.10.600.10">
    <property type="entry name" value="Farnesyl Diphosphate Synthase"/>
    <property type="match status" value="1"/>
</dbReference>
<dbReference type="Gene3D" id="1.50.10.130">
    <property type="entry name" value="Terpene synthase, N-terminal domain"/>
    <property type="match status" value="1"/>
</dbReference>
<dbReference type="InterPro" id="IPR008949">
    <property type="entry name" value="Isoprenoid_synthase_dom_sf"/>
</dbReference>
<dbReference type="InterPro" id="IPR034741">
    <property type="entry name" value="Terpene_cyclase-like_1_C"/>
</dbReference>
<dbReference type="InterPro" id="IPR044814">
    <property type="entry name" value="Terpene_cyclase_plant_C1"/>
</dbReference>
<dbReference type="InterPro" id="IPR001906">
    <property type="entry name" value="Terpene_synth_N"/>
</dbReference>
<dbReference type="InterPro" id="IPR036965">
    <property type="entry name" value="Terpene_synth_N_sf"/>
</dbReference>
<dbReference type="InterPro" id="IPR050148">
    <property type="entry name" value="Terpene_synthase-like"/>
</dbReference>
<dbReference type="InterPro" id="IPR005630">
    <property type="entry name" value="Terpene_synthase_metal-bd"/>
</dbReference>
<dbReference type="InterPro" id="IPR008930">
    <property type="entry name" value="Terpenoid_cyclase/PrenylTrfase"/>
</dbReference>
<dbReference type="PANTHER" id="PTHR31739:SF25">
    <property type="entry name" value="(E,E)-GERANYLLINALOOL SYNTHASE"/>
    <property type="match status" value="1"/>
</dbReference>
<dbReference type="PANTHER" id="PTHR31739">
    <property type="entry name" value="ENT-COPALYL DIPHOSPHATE SYNTHASE, CHLOROPLASTIC"/>
    <property type="match status" value="1"/>
</dbReference>
<dbReference type="Pfam" id="PF01397">
    <property type="entry name" value="Terpene_synth"/>
    <property type="match status" value="1"/>
</dbReference>
<dbReference type="Pfam" id="PF03936">
    <property type="entry name" value="Terpene_synth_C"/>
    <property type="match status" value="1"/>
</dbReference>
<dbReference type="SFLD" id="SFLDS00005">
    <property type="entry name" value="Isoprenoid_Synthase_Type_I"/>
    <property type="match status" value="1"/>
</dbReference>
<dbReference type="SFLD" id="SFLDG01019">
    <property type="entry name" value="Terpene_Cyclase_Like_1_C_Termi"/>
    <property type="match status" value="1"/>
</dbReference>
<dbReference type="SFLD" id="SFLDG01014">
    <property type="entry name" value="Terpene_Cyclase_Like_1_N-term"/>
    <property type="match status" value="1"/>
</dbReference>
<dbReference type="SUPFAM" id="SSF48239">
    <property type="entry name" value="Terpenoid cyclases/Protein prenyltransferases"/>
    <property type="match status" value="1"/>
</dbReference>
<dbReference type="SUPFAM" id="SSF48576">
    <property type="entry name" value="Terpenoid synthases"/>
    <property type="match status" value="1"/>
</dbReference>
<evidence type="ECO:0000250" key="1">
    <source>
        <dbReference type="UniProtKB" id="A0A1C9J6A7"/>
    </source>
</evidence>
<evidence type="ECO:0000250" key="2">
    <source>
        <dbReference type="UniProtKB" id="Q40577"/>
    </source>
</evidence>
<evidence type="ECO:0000255" key="3"/>
<evidence type="ECO:0000269" key="4">
    <source>
    </source>
</evidence>
<evidence type="ECO:0000303" key="5">
    <source>
    </source>
</evidence>
<evidence type="ECO:0000305" key="6"/>
<proteinExistence type="evidence at protein level"/>
<accession>R9QMY8</accession>
<feature type="transit peptide" description="Chloroplast" evidence="3">
    <location>
        <begin position="1"/>
        <end position="47"/>
    </location>
</feature>
<feature type="chain" id="PRO_0000455027" description="(-)-camphene synthase, chloroplastic">
    <location>
        <begin position="48"/>
        <end position="619"/>
    </location>
</feature>
<feature type="short sequence motif" description="DDXXD motif" evidence="6">
    <location>
        <begin position="370"/>
        <end position="374"/>
    </location>
</feature>
<feature type="binding site" evidence="2">
    <location>
        <position position="370"/>
    </location>
    <ligand>
        <name>Mg(2+)</name>
        <dbReference type="ChEBI" id="CHEBI:18420"/>
        <label>1</label>
    </ligand>
</feature>
<feature type="binding site" evidence="2">
    <location>
        <position position="370"/>
    </location>
    <ligand>
        <name>Mg(2+)</name>
        <dbReference type="ChEBI" id="CHEBI:18420"/>
        <label>2</label>
    </ligand>
</feature>
<feature type="binding site" evidence="2">
    <location>
        <position position="374"/>
    </location>
    <ligand>
        <name>Mg(2+)</name>
        <dbReference type="ChEBI" id="CHEBI:18420"/>
        <label>1</label>
    </ligand>
</feature>
<feature type="binding site" evidence="2">
    <location>
        <position position="374"/>
    </location>
    <ligand>
        <name>Mg(2+)</name>
        <dbReference type="ChEBI" id="CHEBI:18420"/>
        <label>2</label>
    </ligand>
</feature>
<feature type="binding site" evidence="2">
    <location>
        <position position="522"/>
    </location>
    <ligand>
        <name>Mg(2+)</name>
        <dbReference type="ChEBI" id="CHEBI:18420"/>
        <label>3</label>
    </ligand>
</feature>
<keyword id="KW-0150">Chloroplast</keyword>
<keyword id="KW-0456">Lyase</keyword>
<keyword id="KW-0460">Magnesium</keyword>
<keyword id="KW-0479">Metal-binding</keyword>
<keyword id="KW-0934">Plastid</keyword>
<keyword id="KW-0809">Transit peptide</keyword>
<protein>
    <recommendedName>
        <fullName evidence="5">(-)-camphene synthase, chloroplastic</fullName>
        <ecNumber evidence="4">4.2.3.117</ecNumber>
    </recommendedName>
    <alternativeName>
        <fullName evidence="5">(+)-alpha-pinene synthase 1, chloroplastic</fullName>
        <ecNumber evidence="4">4.2.3.121</ecNumber>
    </alternativeName>
    <alternativeName>
        <fullName evidence="5">(-)-alpha-pinene synthase 1, chloroplastic</fullName>
        <ecNumber evidence="4">4.2.3.119</ecNumber>
    </alternativeName>
    <alternativeName>
        <fullName evidence="5">(-)-beta-pinene synthase (-)camp/(+)alphapin1, chloroplastic</fullName>
        <ecNumber evidence="4">4.2.3.120</ecNumber>
    </alternativeName>
    <alternativeName>
        <fullName evidence="5">Myrcene synthase (-)camp/(+)alphapin1, chloroplastic</fullName>
        <ecNumber evidence="4">4.2.3.15</ecNumber>
    </alternativeName>
    <alternativeName>
        <fullName evidence="5">Terpene synthase (-)camp/(+)alphapin1</fullName>
        <shortName evidence="5">PcTPS-(-)camp/(+)alphapin1</shortName>
    </alternativeName>
    <alternativeName>
        <fullName evidence="5">Tricyclene synthase (-)camp/(+)alphapin1, chloroplastic</fullName>
        <ecNumber evidence="4">4.2.3.105</ecNumber>
    </alternativeName>
</protein>
<sequence length="619" mass="71300">MALVSVAPLVSMRRSLFSSPYELKSIDKTIPNLVMCRKRMSGTPSIRVSSTTSASNDDGVRRRVGDYRYNHWDDDLIDSLATSYEAPSYLERADTLVEAIKDRFNSMGVEDGERISPLTDLYQRLWMVDSVERLGIDRHFQNEIKSALDYVFSYWKEKGIGRGRQSAVTDLNSTALGFRTLRLHGYPVSSDVLENFKDHNGQFTCSGIQTEGEIRGVLNLFRASLIAFPGEKVMEEAEIFSTMYLKHALQKIAVSSLSQEIEYLLDYGWHTNLPRLEARMYMDVFPQDTIYEQKLVELAKVEFNIFHSLQKRELQSLTRWWKHYGFPQLSFTRHIHVEYYTFASCVATDPKQSAFRLGFAKMSHFVTVLDDIYDTYGTMEELELFTAAIKRWDPSLVDCLPEYMKGVYMAVYDTVNEMAKEAEKVQGRDTLNYVRQAWEPYFDAYMIEAKWISSGYLPTFQEYLDNSKISFGSRITILQPILTLGEPLPHEILQEIDFPSKFNDLISVLLRLKGDTRCYKADRARGEEASSVSCYMKDNAGLTEEDAIHRINAMVHNLLKELNWELLKPDCNVPISCKKAAFDICRIFHHGYKYRDGYGDATIETKNLVKRTVLEPVPL</sequence>
<reference key="1">
    <citation type="journal article" date="2013" name="BMC Plant Biol.">
        <title>Transcriptome resources and functional characterization of monoterpene synthases for two host species of the mountain pine beetle, lodgepole pine (Pinus contorta) and jack pine (Pinus banksiana).</title>
        <authorList>
            <person name="Hall D.E."/>
            <person name="Yuen M.M.S."/>
            <person name="Jancsik S."/>
            <person name="Quesada A.L."/>
            <person name="Dullat H.K."/>
            <person name="Li M."/>
            <person name="Henderson H."/>
            <person name="Arango-Velez A."/>
            <person name="Liao N.Y."/>
            <person name="Docking R.T."/>
            <person name="Chan S.K."/>
            <person name="Cooke J.E.K."/>
            <person name="Breuil C."/>
            <person name="Jones S.J.M."/>
            <person name="Keeling C.I."/>
            <person name="Bohlmann J."/>
        </authorList>
    </citation>
    <scope>NUCLEOTIDE SEQUENCE [MRNA]</scope>
    <scope>FUNCTION</scope>
    <scope>CATALYTIC ACTIVITY</scope>
    <scope>PATHWAY</scope>
</reference>
<comment type="function">
    <text evidence="4">Monoterpene synthase (TPS) involved in the biosynthesis of monoterpene natural products included in conifer oleoresin secretions and volatile emissions; these compounds contribute to biotic and abiotic stress defense against herbivores and pathogens (PubMed:23679205). Catalyzes the conversion of (2E)-geranyl diphosphate (GPP) to (-)-camphene, (+)-alpha-pinene and (-)-alpha-pinene, and, to a lower extent, to tricyclene, myrcene and (-)-beta-pinene (PubMed:23679205).</text>
</comment>
<comment type="catalytic activity">
    <reaction evidence="4">
        <text>(2E)-geranyl diphosphate = (1S,4R)-camphene + diphosphate</text>
        <dbReference type="Rhea" id="RHEA:25484"/>
        <dbReference type="ChEBI" id="CHEBI:89"/>
        <dbReference type="ChEBI" id="CHEBI:33019"/>
        <dbReference type="ChEBI" id="CHEBI:58057"/>
        <dbReference type="EC" id="4.2.3.117"/>
    </reaction>
    <physiologicalReaction direction="left-to-right" evidence="4">
        <dbReference type="Rhea" id="RHEA:25485"/>
    </physiologicalReaction>
</comment>
<comment type="catalytic activity">
    <reaction evidence="4">
        <text>(2E)-geranyl diphosphate = (1R,5R)-alpha-pinene + diphosphate</text>
        <dbReference type="Rhea" id="RHEA:32575"/>
        <dbReference type="ChEBI" id="CHEBI:28261"/>
        <dbReference type="ChEBI" id="CHEBI:33019"/>
        <dbReference type="ChEBI" id="CHEBI:58057"/>
        <dbReference type="EC" id="4.2.3.121"/>
    </reaction>
    <physiologicalReaction direction="left-to-right" evidence="4">
        <dbReference type="Rhea" id="RHEA:32576"/>
    </physiologicalReaction>
</comment>
<comment type="catalytic activity">
    <reaction evidence="4">
        <text>(2E)-geranyl diphosphate = tricyclene + diphosphate</text>
        <dbReference type="Rhea" id="RHEA:32687"/>
        <dbReference type="ChEBI" id="CHEBI:33019"/>
        <dbReference type="ChEBI" id="CHEBI:58057"/>
        <dbReference type="ChEBI" id="CHEBI:64266"/>
        <dbReference type="EC" id="4.2.3.105"/>
    </reaction>
    <physiologicalReaction direction="left-to-right" evidence="4">
        <dbReference type="Rhea" id="RHEA:32688"/>
    </physiologicalReaction>
</comment>
<comment type="catalytic activity">
    <reaction evidence="4">
        <text>(2E)-geranyl diphosphate = beta-myrcene + diphosphate</text>
        <dbReference type="Rhea" id="RHEA:16965"/>
        <dbReference type="ChEBI" id="CHEBI:17221"/>
        <dbReference type="ChEBI" id="CHEBI:33019"/>
        <dbReference type="ChEBI" id="CHEBI:58057"/>
        <dbReference type="EC" id="4.2.3.15"/>
    </reaction>
    <physiologicalReaction direction="left-to-right" evidence="4">
        <dbReference type="Rhea" id="RHEA:16966"/>
    </physiologicalReaction>
</comment>
<comment type="catalytic activity">
    <reaction evidence="4">
        <text>(2E)-geranyl diphosphate = (1S,5S)-beta-pinene + diphosphate</text>
        <dbReference type="Rhea" id="RHEA:25496"/>
        <dbReference type="ChEBI" id="CHEBI:28359"/>
        <dbReference type="ChEBI" id="CHEBI:33019"/>
        <dbReference type="ChEBI" id="CHEBI:58057"/>
        <dbReference type="EC" id="4.2.3.120"/>
    </reaction>
    <physiologicalReaction direction="left-to-right" evidence="4">
        <dbReference type="Rhea" id="RHEA:25497"/>
    </physiologicalReaction>
</comment>
<comment type="catalytic activity">
    <reaction evidence="4">
        <text>(2E)-geranyl diphosphate = (1S,5S)-alpha-pinene + diphosphate</text>
        <dbReference type="Rhea" id="RHEA:25488"/>
        <dbReference type="ChEBI" id="CHEBI:28660"/>
        <dbReference type="ChEBI" id="CHEBI:33019"/>
        <dbReference type="ChEBI" id="CHEBI:58057"/>
        <dbReference type="EC" id="4.2.3.119"/>
    </reaction>
    <physiologicalReaction direction="left-to-right" evidence="4">
        <dbReference type="Rhea" id="RHEA:25489"/>
    </physiologicalReaction>
</comment>
<comment type="cofactor">
    <cofactor evidence="1">
        <name>Mg(2+)</name>
        <dbReference type="ChEBI" id="CHEBI:18420"/>
    </cofactor>
    <cofactor evidence="1">
        <name>Mn(2+)</name>
        <dbReference type="ChEBI" id="CHEBI:29035"/>
    </cofactor>
    <text evidence="1">Binds 3 Mg(2+) or Mn(2+) ions per subunit.</text>
</comment>
<comment type="pathway">
    <text evidence="4">Terpene metabolism; oleoresin biosynthesis.</text>
</comment>
<comment type="pathway">
    <text evidence="4">Secondary metabolite biosynthesis; terpenoid biosynthesis.</text>
</comment>
<comment type="subcellular location">
    <subcellularLocation>
        <location evidence="3">Plastid</location>
        <location evidence="3">Chloroplast</location>
    </subcellularLocation>
</comment>
<comment type="domain">
    <text evidence="6">The Asp-Asp-Xaa-Xaa-Asp/Glu (DDXXD/E) motif is important for the catalytic activity, presumably through binding to Mg(2+).</text>
</comment>
<comment type="similarity">
    <text evidence="6">Belongs to the terpene synthase family. Tpsd subfamily.</text>
</comment>
<organism>
    <name type="scientific">Pinus contorta</name>
    <name type="common">Shore pine</name>
    <name type="synonym">Lodgepole pine</name>
    <dbReference type="NCBI Taxonomy" id="3339"/>
    <lineage>
        <taxon>Eukaryota</taxon>
        <taxon>Viridiplantae</taxon>
        <taxon>Streptophyta</taxon>
        <taxon>Embryophyta</taxon>
        <taxon>Tracheophyta</taxon>
        <taxon>Spermatophyta</taxon>
        <taxon>Pinopsida</taxon>
        <taxon>Pinidae</taxon>
        <taxon>Conifers I</taxon>
        <taxon>Pinales</taxon>
        <taxon>Pinaceae</taxon>
        <taxon>Pinus</taxon>
        <taxon>Pinus subgen. Pinus</taxon>
    </lineage>
</organism>